<gene>
    <name type="primary">nei2</name>
    <name type="synonym">nei1</name>
    <name type="ordered locus">MT3396</name>
</gene>
<evidence type="ECO:0000250" key="1"/>
<evidence type="ECO:0000255" key="2">
    <source>
        <dbReference type="PROSITE-ProRule" id="PRU00391"/>
    </source>
</evidence>
<evidence type="ECO:0000255" key="3">
    <source>
        <dbReference type="PROSITE-ProRule" id="PRU00392"/>
    </source>
</evidence>
<name>END8B_MYCTO</name>
<organism>
    <name type="scientific">Mycobacterium tuberculosis (strain CDC 1551 / Oshkosh)</name>
    <dbReference type="NCBI Taxonomy" id="83331"/>
    <lineage>
        <taxon>Bacteria</taxon>
        <taxon>Bacillati</taxon>
        <taxon>Actinomycetota</taxon>
        <taxon>Actinomycetes</taxon>
        <taxon>Mycobacteriales</taxon>
        <taxon>Mycobacteriaceae</taxon>
        <taxon>Mycobacterium</taxon>
        <taxon>Mycobacterium tuberculosis complex</taxon>
    </lineage>
</organism>
<reference key="1">
    <citation type="journal article" date="2002" name="J. Bacteriol.">
        <title>Whole-genome comparison of Mycobacterium tuberculosis clinical and laboratory strains.</title>
        <authorList>
            <person name="Fleischmann R.D."/>
            <person name="Alland D."/>
            <person name="Eisen J.A."/>
            <person name="Carpenter L."/>
            <person name="White O."/>
            <person name="Peterson J.D."/>
            <person name="DeBoy R.T."/>
            <person name="Dodson R.J."/>
            <person name="Gwinn M.L."/>
            <person name="Haft D.H."/>
            <person name="Hickey E.K."/>
            <person name="Kolonay J.F."/>
            <person name="Nelson W.C."/>
            <person name="Umayam L.A."/>
            <person name="Ermolaeva M.D."/>
            <person name="Salzberg S.L."/>
            <person name="Delcher A."/>
            <person name="Utterback T.R."/>
            <person name="Weidman J.F."/>
            <person name="Khouri H.M."/>
            <person name="Gill J."/>
            <person name="Mikula A."/>
            <person name="Bishai W."/>
            <person name="Jacobs W.R. Jr."/>
            <person name="Venter J.C."/>
            <person name="Fraser C.M."/>
        </authorList>
    </citation>
    <scope>NUCLEOTIDE SEQUENCE [LARGE SCALE GENOMIC DNA]</scope>
    <source>
        <strain>CDC 1551 / Oshkosh</strain>
    </source>
</reference>
<protein>
    <recommendedName>
        <fullName>Endonuclease 8 2</fullName>
    </recommendedName>
    <alternativeName>
        <fullName>DNA glycosylase/AP lyase Nei 2</fullName>
        <ecNumber>3.2.2.-</ecNumber>
    </alternativeName>
    <alternativeName>
        <fullName>DNA-(apurinic or apyrimidinic site) lyase Nei 2</fullName>
        <ecNumber>4.2.99.18</ecNumber>
    </alternativeName>
    <alternativeName>
        <fullName>Endonuclease VIII 2</fullName>
    </alternativeName>
</protein>
<dbReference type="EC" id="3.2.2.-"/>
<dbReference type="EC" id="4.2.99.18"/>
<dbReference type="EMBL" id="AE000516">
    <property type="protein sequence ID" value="AAK47739.1"/>
    <property type="molecule type" value="Genomic_DNA"/>
</dbReference>
<dbReference type="PIR" id="B70982">
    <property type="entry name" value="B70982"/>
</dbReference>
<dbReference type="RefSeq" id="WP_003900006.1">
    <property type="nucleotide sequence ID" value="NZ_KK341227.1"/>
</dbReference>
<dbReference type="SMR" id="P9WNC0"/>
<dbReference type="KEGG" id="mtc:MT3396"/>
<dbReference type="PATRIC" id="fig|83331.31.peg.3655"/>
<dbReference type="HOGENOM" id="CLU_038423_2_0_11"/>
<dbReference type="Proteomes" id="UP000001020">
    <property type="component" value="Chromosome"/>
</dbReference>
<dbReference type="GO" id="GO:0140078">
    <property type="term" value="F:class I DNA-(apurinic or apyrimidinic site) endonuclease activity"/>
    <property type="evidence" value="ECO:0007669"/>
    <property type="project" value="UniProtKB-EC"/>
</dbReference>
<dbReference type="GO" id="GO:0003684">
    <property type="term" value="F:damaged DNA binding"/>
    <property type="evidence" value="ECO:0007669"/>
    <property type="project" value="InterPro"/>
</dbReference>
<dbReference type="GO" id="GO:0000703">
    <property type="term" value="F:oxidized pyrimidine nucleobase lesion DNA N-glycosylase activity"/>
    <property type="evidence" value="ECO:0007669"/>
    <property type="project" value="TreeGrafter"/>
</dbReference>
<dbReference type="GO" id="GO:0008270">
    <property type="term" value="F:zinc ion binding"/>
    <property type="evidence" value="ECO:0007669"/>
    <property type="project" value="UniProtKB-KW"/>
</dbReference>
<dbReference type="GO" id="GO:0006284">
    <property type="term" value="P:base-excision repair"/>
    <property type="evidence" value="ECO:0007669"/>
    <property type="project" value="InterPro"/>
</dbReference>
<dbReference type="CDD" id="cd08971">
    <property type="entry name" value="AcNei2_N"/>
    <property type="match status" value="1"/>
</dbReference>
<dbReference type="FunFam" id="1.10.8.50:FF:000005">
    <property type="entry name" value="Endonuclease 8"/>
    <property type="match status" value="1"/>
</dbReference>
<dbReference type="Gene3D" id="1.10.8.50">
    <property type="match status" value="1"/>
</dbReference>
<dbReference type="Gene3D" id="3.20.190.10">
    <property type="entry name" value="MutM-like, N-terminal"/>
    <property type="match status" value="1"/>
</dbReference>
<dbReference type="InterPro" id="IPR015886">
    <property type="entry name" value="DNA_glyclase/AP_lyase_DNA-bd"/>
</dbReference>
<dbReference type="InterPro" id="IPR015887">
    <property type="entry name" value="DNA_glyclase_Znf_dom_DNA_BS"/>
</dbReference>
<dbReference type="InterPro" id="IPR054878">
    <property type="entry name" value="Endonuc_Nei2"/>
</dbReference>
<dbReference type="InterPro" id="IPR012319">
    <property type="entry name" value="FPG_cat"/>
</dbReference>
<dbReference type="InterPro" id="IPR035937">
    <property type="entry name" value="MutM-like_N-ter"/>
</dbReference>
<dbReference type="InterPro" id="IPR044090">
    <property type="entry name" value="Nei2_N"/>
</dbReference>
<dbReference type="InterPro" id="IPR010979">
    <property type="entry name" value="Ribosomal_uS13-like_H2TH"/>
</dbReference>
<dbReference type="InterPro" id="IPR000214">
    <property type="entry name" value="Znf_DNA_glyclase/AP_lyase"/>
</dbReference>
<dbReference type="NCBIfam" id="NF040775">
    <property type="entry name" value="endonuc_Nei2"/>
    <property type="match status" value="1"/>
</dbReference>
<dbReference type="PANTHER" id="PTHR42697">
    <property type="entry name" value="ENDONUCLEASE 8"/>
    <property type="match status" value="1"/>
</dbReference>
<dbReference type="PANTHER" id="PTHR42697:SF1">
    <property type="entry name" value="ENDONUCLEASE 8"/>
    <property type="match status" value="1"/>
</dbReference>
<dbReference type="Pfam" id="PF01149">
    <property type="entry name" value="Fapy_DNA_glyco"/>
    <property type="match status" value="1"/>
</dbReference>
<dbReference type="Pfam" id="PF06831">
    <property type="entry name" value="H2TH"/>
    <property type="match status" value="1"/>
</dbReference>
<dbReference type="SMART" id="SM00898">
    <property type="entry name" value="Fapy_DNA_glyco"/>
    <property type="match status" value="1"/>
</dbReference>
<dbReference type="SMART" id="SM01232">
    <property type="entry name" value="H2TH"/>
    <property type="match status" value="1"/>
</dbReference>
<dbReference type="SUPFAM" id="SSF57716">
    <property type="entry name" value="Glucocorticoid receptor-like (DNA-binding domain)"/>
    <property type="match status" value="1"/>
</dbReference>
<dbReference type="SUPFAM" id="SSF81624">
    <property type="entry name" value="N-terminal domain of MutM-like DNA repair proteins"/>
    <property type="match status" value="1"/>
</dbReference>
<dbReference type="SUPFAM" id="SSF46946">
    <property type="entry name" value="S13-like H2TH domain"/>
    <property type="match status" value="1"/>
</dbReference>
<dbReference type="PROSITE" id="PS51068">
    <property type="entry name" value="FPG_CAT"/>
    <property type="match status" value="1"/>
</dbReference>
<dbReference type="PROSITE" id="PS01242">
    <property type="entry name" value="ZF_FPG_1"/>
    <property type="match status" value="1"/>
</dbReference>
<dbReference type="PROSITE" id="PS51066">
    <property type="entry name" value="ZF_FPG_2"/>
    <property type="match status" value="1"/>
</dbReference>
<proteinExistence type="inferred from homology"/>
<keyword id="KW-0227">DNA damage</keyword>
<keyword id="KW-0234">DNA repair</keyword>
<keyword id="KW-0238">DNA-binding</keyword>
<keyword id="KW-0326">Glycosidase</keyword>
<keyword id="KW-0378">Hydrolase</keyword>
<keyword id="KW-0456">Lyase</keyword>
<keyword id="KW-0479">Metal-binding</keyword>
<keyword id="KW-0511">Multifunctional enzyme</keyword>
<keyword id="KW-1185">Reference proteome</keyword>
<keyword id="KW-0862">Zinc</keyword>
<keyword id="KW-0863">Zinc-finger</keyword>
<sequence>MPEGDTVWHTAATLRRHLAGRTLTRCDIRVPRFAAVDLTGEVVDEVISRGKHLFIRTGTASIHSHLQMDGSWRVGNRPVRVDHRARIILEANQQEQAIRVVGVDLGLLEVIDRHNDGAVVAHLGPDLLADDWDPQRAAANLIVAPDRPIAEALLDQRVLAGIGNVYCNELCFVSGVLPTAPVSAVADPRRLVTRARDMLWVNRFRWNRCTTGDTRAGRRLWVYGRAGQGCRRCGTLIAYDTTDERVRYWCPACQR</sequence>
<accession>P9WNC0</accession>
<accession>L0TDQ8</accession>
<accession>P64156</accession>
<accession>P96902</accession>
<comment type="function">
    <text evidence="3">Involved in base excision repair of DNA damaged by oxidation or by mutagenic agents. Acts as a DNA glycosylase that recognizes and removes damaged bases. Has AP (apurinic/apyrimidinic) lyase activity and introduces nicks in the DNA strand. Cleaves the DNA backbone by beta-delta elimination to generate a single-strand break at the site of the removed base with both 3'- and 5'-phosphates.</text>
</comment>
<comment type="catalytic activity">
    <reaction evidence="3">
        <text>2'-deoxyribonucleotide-(2'-deoxyribose 5'-phosphate)-2'-deoxyribonucleotide-DNA = a 3'-end 2'-deoxyribonucleotide-(2,3-dehydro-2,3-deoxyribose 5'-phosphate)-DNA + a 5'-end 5'-phospho-2'-deoxyribonucleoside-DNA + H(+)</text>
        <dbReference type="Rhea" id="RHEA:66592"/>
        <dbReference type="Rhea" id="RHEA-COMP:13180"/>
        <dbReference type="Rhea" id="RHEA-COMP:16897"/>
        <dbReference type="Rhea" id="RHEA-COMP:17067"/>
        <dbReference type="ChEBI" id="CHEBI:15378"/>
        <dbReference type="ChEBI" id="CHEBI:136412"/>
        <dbReference type="ChEBI" id="CHEBI:157695"/>
        <dbReference type="ChEBI" id="CHEBI:167181"/>
        <dbReference type="EC" id="4.2.99.18"/>
    </reaction>
</comment>
<comment type="cofactor">
    <cofactor evidence="2">
        <name>Zn(2+)</name>
        <dbReference type="ChEBI" id="CHEBI:29105"/>
    </cofactor>
    <text evidence="2">Binds 1 zinc ion per subunit.</text>
</comment>
<comment type="similarity">
    <text evidence="3">Belongs to the FPG family.</text>
</comment>
<feature type="initiator methionine" description="Removed" evidence="1">
    <location>
        <position position="1"/>
    </location>
</feature>
<feature type="chain" id="PRO_0000427153" description="Endonuclease 8 2">
    <location>
        <begin position="2"/>
        <end position="255"/>
    </location>
</feature>
<feature type="zinc finger region" description="FPG-type" evidence="2">
    <location>
        <begin position="221"/>
        <end position="255"/>
    </location>
</feature>
<feature type="active site" description="Schiff-base intermediate with DNA" evidence="3">
    <location>
        <position position="2"/>
    </location>
</feature>
<feature type="active site" description="Proton donor" evidence="3">
    <location>
        <position position="3"/>
    </location>
</feature>
<feature type="active site" description="Proton donor; for beta-elimination activity" evidence="3">
    <location>
        <position position="51"/>
    </location>
</feature>
<feature type="active site" description="Proton donor; for delta-elimination activity" evidence="3">
    <location>
        <position position="245"/>
    </location>
</feature>
<feature type="binding site" evidence="1">
    <location>
        <position position="67"/>
    </location>
    <ligand>
        <name>DNA</name>
        <dbReference type="ChEBI" id="CHEBI:16991"/>
    </ligand>
</feature>
<feature type="binding site" evidence="1">
    <location>
        <position position="164"/>
    </location>
    <ligand>
        <name>DNA</name>
        <dbReference type="ChEBI" id="CHEBI:16991"/>
    </ligand>
</feature>